<organism>
    <name type="scientific">Shewanella pealeana (strain ATCC 700345 / ANG-SQ1)</name>
    <dbReference type="NCBI Taxonomy" id="398579"/>
    <lineage>
        <taxon>Bacteria</taxon>
        <taxon>Pseudomonadati</taxon>
        <taxon>Pseudomonadota</taxon>
        <taxon>Gammaproteobacteria</taxon>
        <taxon>Alteromonadales</taxon>
        <taxon>Shewanellaceae</taxon>
        <taxon>Shewanella</taxon>
    </lineage>
</organism>
<keyword id="KW-0067">ATP-binding</keyword>
<keyword id="KW-0143">Chaperone</keyword>
<keyword id="KW-0963">Cytoplasm</keyword>
<keyword id="KW-0547">Nucleotide-binding</keyword>
<keyword id="KW-1185">Reference proteome</keyword>
<keyword id="KW-0346">Stress response</keyword>
<reference key="1">
    <citation type="submission" date="2007-10" db="EMBL/GenBank/DDBJ databases">
        <title>Complete sequence of Shewanella pealeana ATCC 700345.</title>
        <authorList>
            <consortium name="US DOE Joint Genome Institute"/>
            <person name="Copeland A."/>
            <person name="Lucas S."/>
            <person name="Lapidus A."/>
            <person name="Barry K."/>
            <person name="Glavina del Rio T."/>
            <person name="Dalin E."/>
            <person name="Tice H."/>
            <person name="Pitluck S."/>
            <person name="Chertkov O."/>
            <person name="Brettin T."/>
            <person name="Bruce D."/>
            <person name="Detter J.C."/>
            <person name="Han C."/>
            <person name="Schmutz J."/>
            <person name="Larimer F."/>
            <person name="Land M."/>
            <person name="Hauser L."/>
            <person name="Kyrpides N."/>
            <person name="Kim E."/>
            <person name="Zhao J.-S.Z."/>
            <person name="Manno D."/>
            <person name="Hawari J."/>
            <person name="Richardson P."/>
        </authorList>
    </citation>
    <scope>NUCLEOTIDE SEQUENCE [LARGE SCALE GENOMIC DNA]</scope>
    <source>
        <strain>ATCC 700345 / ANG-SQ1</strain>
    </source>
</reference>
<feature type="chain" id="PRO_1000081528" description="Chaperone protein HtpG">
    <location>
        <begin position="1"/>
        <end position="638"/>
    </location>
</feature>
<feature type="region of interest" description="A; substrate-binding" evidence="1">
    <location>
        <begin position="1"/>
        <end position="346"/>
    </location>
</feature>
<feature type="region of interest" description="B" evidence="1">
    <location>
        <begin position="347"/>
        <end position="563"/>
    </location>
</feature>
<feature type="region of interest" description="C" evidence="1">
    <location>
        <begin position="564"/>
        <end position="638"/>
    </location>
</feature>
<dbReference type="EMBL" id="CP000851">
    <property type="protein sequence ID" value="ABV86851.1"/>
    <property type="molecule type" value="Genomic_DNA"/>
</dbReference>
<dbReference type="RefSeq" id="WP_012154775.1">
    <property type="nucleotide sequence ID" value="NC_009901.1"/>
</dbReference>
<dbReference type="SMR" id="A8H2R4"/>
<dbReference type="STRING" id="398579.Spea_1526"/>
<dbReference type="KEGG" id="spl:Spea_1526"/>
<dbReference type="eggNOG" id="COG0326">
    <property type="taxonomic scope" value="Bacteria"/>
</dbReference>
<dbReference type="HOGENOM" id="CLU_006684_3_0_6"/>
<dbReference type="OrthoDB" id="9802640at2"/>
<dbReference type="Proteomes" id="UP000002608">
    <property type="component" value="Chromosome"/>
</dbReference>
<dbReference type="GO" id="GO:0005737">
    <property type="term" value="C:cytoplasm"/>
    <property type="evidence" value="ECO:0007669"/>
    <property type="project" value="UniProtKB-SubCell"/>
</dbReference>
<dbReference type="GO" id="GO:0005524">
    <property type="term" value="F:ATP binding"/>
    <property type="evidence" value="ECO:0007669"/>
    <property type="project" value="UniProtKB-UniRule"/>
</dbReference>
<dbReference type="GO" id="GO:0016887">
    <property type="term" value="F:ATP hydrolysis activity"/>
    <property type="evidence" value="ECO:0007669"/>
    <property type="project" value="InterPro"/>
</dbReference>
<dbReference type="GO" id="GO:0140662">
    <property type="term" value="F:ATP-dependent protein folding chaperone"/>
    <property type="evidence" value="ECO:0007669"/>
    <property type="project" value="InterPro"/>
</dbReference>
<dbReference type="GO" id="GO:0051082">
    <property type="term" value="F:unfolded protein binding"/>
    <property type="evidence" value="ECO:0007669"/>
    <property type="project" value="UniProtKB-UniRule"/>
</dbReference>
<dbReference type="CDD" id="cd16927">
    <property type="entry name" value="HATPase_Hsp90-like"/>
    <property type="match status" value="1"/>
</dbReference>
<dbReference type="FunFam" id="3.30.230.80:FF:000002">
    <property type="entry name" value="Molecular chaperone HtpG"/>
    <property type="match status" value="1"/>
</dbReference>
<dbReference type="FunFam" id="3.30.565.10:FF:000009">
    <property type="entry name" value="Molecular chaperone HtpG"/>
    <property type="match status" value="1"/>
</dbReference>
<dbReference type="Gene3D" id="3.30.230.80">
    <property type="match status" value="1"/>
</dbReference>
<dbReference type="Gene3D" id="3.40.50.11260">
    <property type="match status" value="1"/>
</dbReference>
<dbReference type="Gene3D" id="1.20.120.790">
    <property type="entry name" value="Heat shock protein 90, C-terminal domain"/>
    <property type="match status" value="1"/>
</dbReference>
<dbReference type="Gene3D" id="3.30.565.10">
    <property type="entry name" value="Histidine kinase-like ATPase, C-terminal domain"/>
    <property type="match status" value="1"/>
</dbReference>
<dbReference type="HAMAP" id="MF_00505">
    <property type="entry name" value="HSP90"/>
    <property type="match status" value="1"/>
</dbReference>
<dbReference type="InterPro" id="IPR036890">
    <property type="entry name" value="HATPase_C_sf"/>
</dbReference>
<dbReference type="InterPro" id="IPR019805">
    <property type="entry name" value="Heat_shock_protein_90_CS"/>
</dbReference>
<dbReference type="InterPro" id="IPR037196">
    <property type="entry name" value="HSP90_C"/>
</dbReference>
<dbReference type="InterPro" id="IPR001404">
    <property type="entry name" value="Hsp90_fam"/>
</dbReference>
<dbReference type="InterPro" id="IPR020575">
    <property type="entry name" value="Hsp90_N"/>
</dbReference>
<dbReference type="InterPro" id="IPR020568">
    <property type="entry name" value="Ribosomal_Su5_D2-typ_SF"/>
</dbReference>
<dbReference type="NCBIfam" id="NF003555">
    <property type="entry name" value="PRK05218.1"/>
    <property type="match status" value="1"/>
</dbReference>
<dbReference type="PANTHER" id="PTHR11528">
    <property type="entry name" value="HEAT SHOCK PROTEIN 90 FAMILY MEMBER"/>
    <property type="match status" value="1"/>
</dbReference>
<dbReference type="Pfam" id="PF13589">
    <property type="entry name" value="HATPase_c_3"/>
    <property type="match status" value="1"/>
</dbReference>
<dbReference type="Pfam" id="PF00183">
    <property type="entry name" value="HSP90"/>
    <property type="match status" value="1"/>
</dbReference>
<dbReference type="PIRSF" id="PIRSF002583">
    <property type="entry name" value="Hsp90"/>
    <property type="match status" value="1"/>
</dbReference>
<dbReference type="PRINTS" id="PR00775">
    <property type="entry name" value="HEATSHOCK90"/>
</dbReference>
<dbReference type="SMART" id="SM00387">
    <property type="entry name" value="HATPase_c"/>
    <property type="match status" value="1"/>
</dbReference>
<dbReference type="SUPFAM" id="SSF55874">
    <property type="entry name" value="ATPase domain of HSP90 chaperone/DNA topoisomerase II/histidine kinase"/>
    <property type="match status" value="1"/>
</dbReference>
<dbReference type="SUPFAM" id="SSF110942">
    <property type="entry name" value="HSP90 C-terminal domain"/>
    <property type="match status" value="1"/>
</dbReference>
<dbReference type="SUPFAM" id="SSF54211">
    <property type="entry name" value="Ribosomal protein S5 domain 2-like"/>
    <property type="match status" value="1"/>
</dbReference>
<dbReference type="PROSITE" id="PS00298">
    <property type="entry name" value="HSP90"/>
    <property type="match status" value="1"/>
</dbReference>
<comment type="function">
    <text evidence="1">Molecular chaperone. Has ATPase activity.</text>
</comment>
<comment type="subunit">
    <text evidence="1">Homodimer.</text>
</comment>
<comment type="subcellular location">
    <subcellularLocation>
        <location evidence="1">Cytoplasm</location>
    </subcellularLocation>
</comment>
<comment type="similarity">
    <text evidence="1">Belongs to the heat shock protein 90 family.</text>
</comment>
<gene>
    <name evidence="1" type="primary">htpG</name>
    <name type="ordered locus">Spea_1526</name>
</gene>
<name>HTPG_SHEPA</name>
<evidence type="ECO:0000255" key="1">
    <source>
        <dbReference type="HAMAP-Rule" id="MF_00505"/>
    </source>
</evidence>
<sequence length="638" mass="71882">MSQQETHGFQTEVKQLLHLMIHSLYSNKEIFLRELVSNAADAADKLRYEALTNDNLYEGDGELRVRISADKEKGTVTIEDNGIGMTRDGVIEHLGTIAKSGTADFFKKLSGDESKDSQLIGQFGVGFYSSFIVADRVTVRTRAAGHSADEAVLWESAGEGDFTVETISKQTRGTEITLHLRDDEKEFADDYRLRSIITKYSDHISVPVEMFEAGTPAVEATEDTEAVAATEGSWKPMNKATALWTRNKSDVSDEEYQEFYKHISHDFTDPLLWSHNRVEGKQEYTSLLYIPAKAPWDMWNRDRKHGLKLFVQRVFVMDDAEQFMPSYLRFVQGLIDSNDLPLNVSREILQDNKVTTALRTAVTKRVLGMLEKLAKNDAEKYQSFWTEFGQVLKEGPAEDFANKERIAGLLRFASTHTGEATPNVSLADYIERMQEGQSKIYYIVADSHEAAANSPHLELLRKKGIEVLLMSERIDEWLINHLTEFDGKKLHSVTRGDLELGELEDDDEKEAQEKLQTESEGLVKRVKDSLGDKVSEVKVTTRLTDTPACVVAGEGEMSTQMIKLMQAAGQDVPEPKPTFELNPEHPLVARLNDEQDEQQFAQWSELLLQQALLSEKGSLADPSAFIKLMNQMLLASVK</sequence>
<protein>
    <recommendedName>
        <fullName evidence="1">Chaperone protein HtpG</fullName>
    </recommendedName>
    <alternativeName>
        <fullName evidence="1">Heat shock protein HtpG</fullName>
    </alternativeName>
    <alternativeName>
        <fullName evidence="1">High temperature protein G</fullName>
    </alternativeName>
</protein>
<proteinExistence type="inferred from homology"/>
<accession>A8H2R4</accession>